<comment type="function">
    <text evidence="1 3">Potassium channel regulatory subunit that modulate the delayed rectifier voltage-gated potassium channel activity of KCNB1 and KCNB2 by altering their kinetics, expression levels, and shifting the half-inactivation potential to more polarized values. While it does not form functional channels on its own, it can form functional heterotetrameric channels with KCNB1 and KCNB2 (By similarity). Each regulatory subunit has unique regulatory properties that can lead to extensive inhibition, significant changes in kinetics, and/or substantial shifts in the voltage dependencies of the inactivation process (By similarity).</text>
</comment>
<comment type="subunit">
    <text evidence="1 3">Heterotetramer with KCNB1 (By similarity). Heterotetramer with KCNB2 (By similarity). Does not form homomultimers (By similarity).</text>
</comment>
<comment type="subcellular location">
    <subcellularLocation>
        <location evidence="3">Cell membrane</location>
        <topology evidence="3">Multi-pass membrane protein</topology>
    </subcellularLocation>
    <text evidence="3">May not reach the plasma membrane but remain in an intracellular compartment in the absence of KCNB1 or KCNB2.</text>
</comment>
<comment type="domain">
    <text evidence="2">The transmembrane segment S4 functions as a voltage-sensor and is characterized by a series of positively charged amino acids at every third position. Channel opening and closing is effected by a conformation change that affects the position and orientation of the voltage-sensor paddle formed by S3 and S4 within the membrane. A transmembrane electric field that is positive inside would push the positively charged S4 segment outwards, thereby opening the pore, while a field that is negative inside would pull the S4 segment inwards and close the pore. Changes in the position and orientation of S4 are then transmitted to the activation gate formed by the inner helix bundle via the S4-S5 linker region.</text>
</comment>
<comment type="similarity">
    <text evidence="5">Belongs to the potassium channel family. S (TC 1.A.1.2) subfamily. Kv9.1/KCNS1 sub-subfamily.</text>
</comment>
<sequence>MLMLLVRGTHYESLRSKVVLPTPLGGRSTEALVSECPIPDTGIRWRQSDEALRVNVGGVRRLLSARALARFPGTRLGRLQAAASEEQARRLCDDYDAAAHEFYFDRHPGFFLGLLHFYRTGHLHVLDELCVFAFGQEADYWGLGENALAACCRARYLERRLTQPRAWDEDSDTPSSVDPCPDEISDVQRELARYGAARCGRLRRRLWLTMENPGYSLPSKLFSCVSISVVLASIAAMCIHSLPEYQAREAAAAVAAVAAGRSPEGVRDDPVLRRLEYFCIAWFSFEVSSRLLLAPSTRNFFCHPLNLIDIVSVLPFYLTLLAGVALGDQGGTGGKELGHLGKVVQVFRLMRIFRVLKLARHSTGLRSLGATLKHSYREVGILLLYLAVGVSVFSGVAYTAEKEEDVGFNTIPACWWWGTVSMTTVGYGDVVPVTVAGKLAASGCILGGILVVALPITIIFNKFSHFYRRQKALEAAVRNSNHQEFEDLLSSVDAVSEASLETSRETSQEGRSADLETQAPSEPPHPQMY</sequence>
<gene>
    <name evidence="3" type="primary">KCNS1</name>
</gene>
<protein>
    <recommendedName>
        <fullName evidence="3">Delayed-rectifier potassium channel regulatory subunit KCNS1</fullName>
    </recommendedName>
    <alternativeName>
        <fullName>Delayed-rectifier K(+) channel alpha subunit 1</fullName>
    </alternativeName>
    <alternativeName>
        <fullName evidence="3">Delayed-rectifier potassium channel subunit Kv9.1</fullName>
    </alternativeName>
</protein>
<evidence type="ECO:0000250" key="1">
    <source>
        <dbReference type="UniProtKB" id="O35173"/>
    </source>
</evidence>
<evidence type="ECO:0000250" key="2">
    <source>
        <dbReference type="UniProtKB" id="P63142"/>
    </source>
</evidence>
<evidence type="ECO:0000250" key="3">
    <source>
        <dbReference type="UniProtKB" id="Q96KK3"/>
    </source>
</evidence>
<evidence type="ECO:0000256" key="4">
    <source>
        <dbReference type="SAM" id="MobiDB-lite"/>
    </source>
</evidence>
<evidence type="ECO:0000305" key="5"/>
<feature type="chain" id="PRO_0000289621" description="Delayed-rectifier potassium channel regulatory subunit KCNS1">
    <location>
        <begin position="1"/>
        <end position="529"/>
    </location>
</feature>
<feature type="topological domain" description="Cytoplasmic" evidence="2">
    <location>
        <begin position="1"/>
        <end position="217"/>
    </location>
</feature>
<feature type="transmembrane region" description="Helical; Name=Segment S1" evidence="2">
    <location>
        <begin position="218"/>
        <end position="239"/>
    </location>
</feature>
<feature type="topological domain" description="Extracellular" evidence="2">
    <location>
        <begin position="240"/>
        <end position="270"/>
    </location>
</feature>
<feature type="transmembrane region" description="Helical; Name=Segment S2" evidence="2">
    <location>
        <begin position="271"/>
        <end position="293"/>
    </location>
</feature>
<feature type="topological domain" description="Cytoplasmic" evidence="2">
    <location>
        <begin position="294"/>
        <end position="304"/>
    </location>
</feature>
<feature type="transmembrane region" description="Helical; Name=Segment S3" evidence="2">
    <location>
        <begin position="305"/>
        <end position="322"/>
    </location>
</feature>
<feature type="topological domain" description="Extracellular" evidence="2">
    <location>
        <begin position="323"/>
        <end position="340"/>
    </location>
</feature>
<feature type="transmembrane region" description="Helical; Voltage-sensor; Name=Segment S4" evidence="2">
    <location>
        <begin position="341"/>
        <end position="361"/>
    </location>
</feature>
<feature type="topological domain" description="Cytoplasmic" evidence="2">
    <location>
        <begin position="362"/>
        <end position="376"/>
    </location>
</feature>
<feature type="transmembrane region" description="Helical; Name=Segment S5" evidence="2">
    <location>
        <begin position="377"/>
        <end position="398"/>
    </location>
</feature>
<feature type="topological domain" description="Extracellular" evidence="2">
    <location>
        <begin position="399"/>
        <end position="411"/>
    </location>
</feature>
<feature type="intramembrane region" description="Helical; Name=Pore helix" evidence="2">
    <location>
        <begin position="412"/>
        <end position="423"/>
    </location>
</feature>
<feature type="intramembrane region" evidence="2">
    <location>
        <begin position="424"/>
        <end position="431"/>
    </location>
</feature>
<feature type="topological domain" description="Extracellular" evidence="2">
    <location>
        <begin position="432"/>
        <end position="438"/>
    </location>
</feature>
<feature type="transmembrane region" description="Helical; Name=Segment S6" evidence="2">
    <location>
        <begin position="439"/>
        <end position="467"/>
    </location>
</feature>
<feature type="topological domain" description="Cytoplasmic" evidence="2">
    <location>
        <begin position="468"/>
        <end position="529"/>
    </location>
</feature>
<feature type="region of interest" description="Disordered" evidence="4">
    <location>
        <begin position="496"/>
        <end position="529"/>
    </location>
</feature>
<feature type="short sequence motif" description="Selectivity filter" evidence="2">
    <location>
        <begin position="424"/>
        <end position="429"/>
    </location>
</feature>
<feature type="compositionally biased region" description="Basic and acidic residues" evidence="4">
    <location>
        <begin position="502"/>
        <end position="514"/>
    </location>
</feature>
<accession>A4K2M4</accession>
<name>KCNS1_PAPAN</name>
<keyword id="KW-1003">Cell membrane</keyword>
<keyword id="KW-0407">Ion channel</keyword>
<keyword id="KW-0406">Ion transport</keyword>
<keyword id="KW-0472">Membrane</keyword>
<keyword id="KW-0630">Potassium</keyword>
<keyword id="KW-0631">Potassium channel</keyword>
<keyword id="KW-0633">Potassium transport</keyword>
<keyword id="KW-1185">Reference proteome</keyword>
<keyword id="KW-0812">Transmembrane</keyword>
<keyword id="KW-1133">Transmembrane helix</keyword>
<keyword id="KW-0813">Transport</keyword>
<keyword id="KW-0851">Voltage-gated channel</keyword>
<organism>
    <name type="scientific">Papio anubis</name>
    <name type="common">Olive baboon</name>
    <dbReference type="NCBI Taxonomy" id="9555"/>
    <lineage>
        <taxon>Eukaryota</taxon>
        <taxon>Metazoa</taxon>
        <taxon>Chordata</taxon>
        <taxon>Craniata</taxon>
        <taxon>Vertebrata</taxon>
        <taxon>Euteleostomi</taxon>
        <taxon>Mammalia</taxon>
        <taxon>Eutheria</taxon>
        <taxon>Euarchontoglires</taxon>
        <taxon>Primates</taxon>
        <taxon>Haplorrhini</taxon>
        <taxon>Catarrhini</taxon>
        <taxon>Cercopithecidae</taxon>
        <taxon>Cercopithecinae</taxon>
        <taxon>Papio</taxon>
    </lineage>
</organism>
<dbReference type="EMBL" id="DP000036">
    <property type="protein sequence ID" value="ABO52907.1"/>
    <property type="molecule type" value="Genomic_DNA"/>
</dbReference>
<dbReference type="RefSeq" id="NP_001162204.1">
    <property type="nucleotide sequence ID" value="NM_001168733.1"/>
</dbReference>
<dbReference type="RefSeq" id="XP_009214305.1">
    <property type="nucleotide sequence ID" value="XM_009216041.2"/>
</dbReference>
<dbReference type="RefSeq" id="XP_021799800.1">
    <property type="nucleotide sequence ID" value="XM_021944108.2"/>
</dbReference>
<dbReference type="SMR" id="A4K2M4"/>
<dbReference type="STRING" id="9555.ENSPANP00000017672"/>
<dbReference type="Ensembl" id="ENSPANT00000022653.3">
    <property type="protein sequence ID" value="ENSPANP00000017672.1"/>
    <property type="gene ID" value="ENSPANG00000011732.3"/>
</dbReference>
<dbReference type="GeneID" id="100137164"/>
<dbReference type="KEGG" id="panu:100137164"/>
<dbReference type="CTD" id="3787"/>
<dbReference type="eggNOG" id="KOG3713">
    <property type="taxonomic scope" value="Eukaryota"/>
</dbReference>
<dbReference type="GeneTree" id="ENSGT00940000160096"/>
<dbReference type="HOGENOM" id="CLU_011722_4_1_1"/>
<dbReference type="OMA" id="CSGRYHE"/>
<dbReference type="Proteomes" id="UP000028761">
    <property type="component" value="Chromosome 16"/>
</dbReference>
<dbReference type="Bgee" id="ENSPANG00000011732">
    <property type="expression patterns" value="Expressed in visual cortex and 2 other cell types or tissues"/>
</dbReference>
<dbReference type="GO" id="GO:0005654">
    <property type="term" value="C:nucleoplasm"/>
    <property type="evidence" value="ECO:0007669"/>
    <property type="project" value="Ensembl"/>
</dbReference>
<dbReference type="GO" id="GO:0048471">
    <property type="term" value="C:perinuclear region of cytoplasm"/>
    <property type="evidence" value="ECO:0000250"/>
    <property type="project" value="UniProtKB"/>
</dbReference>
<dbReference type="GO" id="GO:0005886">
    <property type="term" value="C:plasma membrane"/>
    <property type="evidence" value="ECO:0000250"/>
    <property type="project" value="UniProtKB"/>
</dbReference>
<dbReference type="GO" id="GO:0008076">
    <property type="term" value="C:voltage-gated potassium channel complex"/>
    <property type="evidence" value="ECO:0000250"/>
    <property type="project" value="UniProtKB"/>
</dbReference>
<dbReference type="GO" id="GO:0005251">
    <property type="term" value="F:delayed rectifier potassium channel activity"/>
    <property type="evidence" value="ECO:0007669"/>
    <property type="project" value="TreeGrafter"/>
</dbReference>
<dbReference type="GO" id="GO:0015459">
    <property type="term" value="F:potassium channel regulator activity"/>
    <property type="evidence" value="ECO:0000250"/>
    <property type="project" value="UniProtKB"/>
</dbReference>
<dbReference type="GO" id="GO:0001508">
    <property type="term" value="P:action potential"/>
    <property type="evidence" value="ECO:0007669"/>
    <property type="project" value="TreeGrafter"/>
</dbReference>
<dbReference type="GO" id="GO:0006813">
    <property type="term" value="P:potassium ion transport"/>
    <property type="evidence" value="ECO:0000250"/>
    <property type="project" value="UniProtKB"/>
</dbReference>
<dbReference type="GO" id="GO:0051260">
    <property type="term" value="P:protein homooligomerization"/>
    <property type="evidence" value="ECO:0007669"/>
    <property type="project" value="InterPro"/>
</dbReference>
<dbReference type="GO" id="GO:1901379">
    <property type="term" value="P:regulation of potassium ion transmembrane transport"/>
    <property type="evidence" value="ECO:0000250"/>
    <property type="project" value="UniProtKB"/>
</dbReference>
<dbReference type="FunFam" id="1.10.287.70:FF:000005">
    <property type="entry name" value="potassium voltage-gated channel subfamily G member 1"/>
    <property type="match status" value="1"/>
</dbReference>
<dbReference type="FunFam" id="3.30.710.10:FF:000102">
    <property type="entry name" value="Potassium voltage-gated channel subfamily S member 1"/>
    <property type="match status" value="1"/>
</dbReference>
<dbReference type="FunFam" id="1.20.120.350:FF:000029">
    <property type="entry name" value="Potassium voltage-gated channel subfamily S member 2"/>
    <property type="match status" value="1"/>
</dbReference>
<dbReference type="Gene3D" id="1.10.287.70">
    <property type="match status" value="1"/>
</dbReference>
<dbReference type="Gene3D" id="3.30.710.10">
    <property type="entry name" value="Potassium Channel Kv1.1, Chain A"/>
    <property type="match status" value="1"/>
</dbReference>
<dbReference type="Gene3D" id="1.20.120.350">
    <property type="entry name" value="Voltage-gated potassium channels. Chain C"/>
    <property type="match status" value="1"/>
</dbReference>
<dbReference type="InterPro" id="IPR000210">
    <property type="entry name" value="BTB/POZ_dom"/>
</dbReference>
<dbReference type="InterPro" id="IPR005821">
    <property type="entry name" value="Ion_trans_dom"/>
</dbReference>
<dbReference type="InterPro" id="IPR003968">
    <property type="entry name" value="K_chnl_volt-dep_Kv"/>
</dbReference>
<dbReference type="InterPro" id="IPR003971">
    <property type="entry name" value="K_chnl_volt-dep_Kv5/Kv9"/>
</dbReference>
<dbReference type="InterPro" id="IPR011333">
    <property type="entry name" value="SKP1/BTB/POZ_sf"/>
</dbReference>
<dbReference type="InterPro" id="IPR003131">
    <property type="entry name" value="T1-type_BTB"/>
</dbReference>
<dbReference type="InterPro" id="IPR028325">
    <property type="entry name" value="VG_K_chnl"/>
</dbReference>
<dbReference type="InterPro" id="IPR027359">
    <property type="entry name" value="Volt_channel_dom_sf"/>
</dbReference>
<dbReference type="PANTHER" id="PTHR11537:SF61">
    <property type="entry name" value="POTASSIUM VOLTAGE-GATED CHANNEL SUBFAMILY S MEMBER 1"/>
    <property type="match status" value="1"/>
</dbReference>
<dbReference type="PANTHER" id="PTHR11537">
    <property type="entry name" value="VOLTAGE-GATED POTASSIUM CHANNEL"/>
    <property type="match status" value="1"/>
</dbReference>
<dbReference type="Pfam" id="PF02214">
    <property type="entry name" value="BTB_2"/>
    <property type="match status" value="1"/>
</dbReference>
<dbReference type="Pfam" id="PF00520">
    <property type="entry name" value="Ion_trans"/>
    <property type="match status" value="1"/>
</dbReference>
<dbReference type="PRINTS" id="PR00169">
    <property type="entry name" value="KCHANNEL"/>
</dbReference>
<dbReference type="PRINTS" id="PR01494">
    <property type="entry name" value="KV9CHANNEL"/>
</dbReference>
<dbReference type="PRINTS" id="PR01491">
    <property type="entry name" value="KVCHANNEL"/>
</dbReference>
<dbReference type="SMART" id="SM00225">
    <property type="entry name" value="BTB"/>
    <property type="match status" value="1"/>
</dbReference>
<dbReference type="SUPFAM" id="SSF54695">
    <property type="entry name" value="POZ domain"/>
    <property type="match status" value="1"/>
</dbReference>
<dbReference type="SUPFAM" id="SSF81324">
    <property type="entry name" value="Voltage-gated potassium channels"/>
    <property type="match status" value="1"/>
</dbReference>
<proteinExistence type="inferred from homology"/>
<reference key="1">
    <citation type="journal article" date="2007" name="Genome Res.">
        <title>Comparative sequence analyses reveal rapid and divergent evolutionary changes of the WFDC locus in the primate lineage.</title>
        <authorList>
            <consortium name="NISC comparative sequencing program"/>
            <person name="Hurle B."/>
            <person name="Swanson W."/>
            <person name="Green E.D."/>
        </authorList>
    </citation>
    <scope>NUCLEOTIDE SEQUENCE [GENOMIC DNA]</scope>
</reference>